<accession>P19975</accession>
<accession>Q43080</accession>
<dbReference type="EC" id="1.16.3.1"/>
<dbReference type="EMBL" id="X64417">
    <property type="protein sequence ID" value="CAA45763.1"/>
    <property type="molecule type" value="mRNA"/>
</dbReference>
<dbReference type="EMBL" id="X73369">
    <property type="protein sequence ID" value="CAA51786.1"/>
    <property type="molecule type" value="mRNA"/>
</dbReference>
<dbReference type="PIR" id="S27358">
    <property type="entry name" value="S27358"/>
</dbReference>
<dbReference type="SMR" id="P19975"/>
<dbReference type="GO" id="GO:0009507">
    <property type="term" value="C:chloroplast"/>
    <property type="evidence" value="ECO:0007669"/>
    <property type="project" value="UniProtKB-SubCell"/>
</dbReference>
<dbReference type="GO" id="GO:0008199">
    <property type="term" value="F:ferric iron binding"/>
    <property type="evidence" value="ECO:0007669"/>
    <property type="project" value="InterPro"/>
</dbReference>
<dbReference type="GO" id="GO:0008198">
    <property type="term" value="F:ferrous iron binding"/>
    <property type="evidence" value="ECO:0007669"/>
    <property type="project" value="TreeGrafter"/>
</dbReference>
<dbReference type="GO" id="GO:0004322">
    <property type="term" value="F:ferroxidase activity"/>
    <property type="evidence" value="ECO:0007669"/>
    <property type="project" value="UniProtKB-EC"/>
</dbReference>
<dbReference type="GO" id="GO:0006879">
    <property type="term" value="P:intracellular iron ion homeostasis"/>
    <property type="evidence" value="ECO:0007669"/>
    <property type="project" value="UniProtKB-KW"/>
</dbReference>
<dbReference type="GO" id="GO:0006826">
    <property type="term" value="P:iron ion transport"/>
    <property type="evidence" value="ECO:0007669"/>
    <property type="project" value="InterPro"/>
</dbReference>
<dbReference type="CDD" id="cd01056">
    <property type="entry name" value="Euk_Ferritin"/>
    <property type="match status" value="1"/>
</dbReference>
<dbReference type="FunFam" id="1.20.1260.10:FF:000006">
    <property type="entry name" value="Ferritin"/>
    <property type="match status" value="1"/>
</dbReference>
<dbReference type="Gene3D" id="1.20.1260.10">
    <property type="match status" value="1"/>
</dbReference>
<dbReference type="InterPro" id="IPR001519">
    <property type="entry name" value="Ferritin"/>
</dbReference>
<dbReference type="InterPro" id="IPR012347">
    <property type="entry name" value="Ferritin-like"/>
</dbReference>
<dbReference type="InterPro" id="IPR009040">
    <property type="entry name" value="Ferritin-like_diiron"/>
</dbReference>
<dbReference type="InterPro" id="IPR009078">
    <property type="entry name" value="Ferritin-like_SF"/>
</dbReference>
<dbReference type="InterPro" id="IPR014034">
    <property type="entry name" value="Ferritin_CS"/>
</dbReference>
<dbReference type="InterPro" id="IPR008331">
    <property type="entry name" value="Ferritin_DPS_dom"/>
</dbReference>
<dbReference type="PANTHER" id="PTHR11431">
    <property type="entry name" value="FERRITIN"/>
    <property type="match status" value="1"/>
</dbReference>
<dbReference type="PANTHER" id="PTHR11431:SF90">
    <property type="entry name" value="FERRITIN-1, CHLOROPLASTIC"/>
    <property type="match status" value="1"/>
</dbReference>
<dbReference type="Pfam" id="PF00210">
    <property type="entry name" value="Ferritin"/>
    <property type="match status" value="1"/>
</dbReference>
<dbReference type="SUPFAM" id="SSF47240">
    <property type="entry name" value="Ferritin-like"/>
    <property type="match status" value="1"/>
</dbReference>
<dbReference type="PROSITE" id="PS00540">
    <property type="entry name" value="FERRITIN_1"/>
    <property type="match status" value="1"/>
</dbReference>
<dbReference type="PROSITE" id="PS00204">
    <property type="entry name" value="FERRITIN_2"/>
    <property type="match status" value="1"/>
</dbReference>
<dbReference type="PROSITE" id="PS50905">
    <property type="entry name" value="FERRITIN_LIKE"/>
    <property type="match status" value="1"/>
</dbReference>
<keyword id="KW-0150">Chloroplast</keyword>
<keyword id="KW-0903">Direct protein sequencing</keyword>
<keyword id="KW-0408">Iron</keyword>
<keyword id="KW-0409">Iron storage</keyword>
<keyword id="KW-0479">Metal-binding</keyword>
<keyword id="KW-0560">Oxidoreductase</keyword>
<keyword id="KW-0934">Plastid</keyword>
<keyword id="KW-0809">Transit peptide</keyword>
<evidence type="ECO:0000255" key="1">
    <source>
        <dbReference type="PROSITE-ProRule" id="PRU00085"/>
    </source>
</evidence>
<evidence type="ECO:0000269" key="2">
    <source>
    </source>
</evidence>
<evidence type="ECO:0000305" key="3"/>
<proteinExistence type="evidence at protein level"/>
<protein>
    <recommendedName>
        <fullName>Ferritin-1, chloroplastic</fullName>
        <ecNumber>1.16.3.1</ecNumber>
    </recommendedName>
</protein>
<reference key="1">
    <citation type="journal article" date="1992" name="Biochem. J.">
        <title>Amino-acid sequence and predicted three-dimensional structure of pea seed (Pisum sativum) ferritin.</title>
        <authorList>
            <person name="Lobreaux S."/>
            <person name="Yewdall S.J."/>
            <person name="Briat J.-F."/>
            <person name="Harrison P.M."/>
        </authorList>
    </citation>
    <scope>NUCLEOTIDE SEQUENCE [MRNA]</scope>
</reference>
<reference key="2">
    <citation type="journal article" date="1995" name="Biochem. J.">
        <title>Purification and characterization of recombinant pea-seed ferritins expressed in Escherichia coli: influence of N-terminus deletions on protein solubility and core formation in vitro.</title>
        <authorList>
            <person name="Van Wuytswinkel O."/>
            <person name="Savino G."/>
            <person name="Briat J.-F."/>
        </authorList>
    </citation>
    <scope>NUCLEOTIDE SEQUENCE [MRNA]</scope>
</reference>
<reference key="3">
    <citation type="journal article" date="1989" name="J. Biol. Chem.">
        <title>Mechanism of the transition from plant ferritin to phytosiderin.</title>
        <authorList>
            <person name="Laulhere J.-P."/>
            <person name="Laboure A.M."/>
            <person name="Briat J.-F."/>
        </authorList>
    </citation>
    <scope>PROTEIN SEQUENCE OF 48-82</scope>
    <source>
        <tissue>Seed</tissue>
    </source>
</reference>
<name>FRI1_PEA</name>
<comment type="function">
    <text>Stores iron in a soluble, non-toxic, readily available form. Important for iron homeostasis. Has ferroxidase activity. Iron is taken up in the ferrous form and deposited as ferric hydroxides after oxidation.</text>
</comment>
<comment type="catalytic activity">
    <reaction>
        <text>4 Fe(2+) + O2 + 4 H(+) = 4 Fe(3+) + 2 H2O</text>
        <dbReference type="Rhea" id="RHEA:11148"/>
        <dbReference type="ChEBI" id="CHEBI:15377"/>
        <dbReference type="ChEBI" id="CHEBI:15378"/>
        <dbReference type="ChEBI" id="CHEBI:15379"/>
        <dbReference type="ChEBI" id="CHEBI:29033"/>
        <dbReference type="ChEBI" id="CHEBI:29034"/>
        <dbReference type="EC" id="1.16.3.1"/>
    </reaction>
</comment>
<comment type="subunit">
    <text>Oligomer of 24 subunits. There are two types of subunits: L (light) chain and H (heavy) chain. The major chain can be light or heavy, depending on the species and tissue type. The functional molecule forms a roughly spherical shell with a diameter of 12 nm and contains a central cavity into which the insoluble mineral iron core is deposited.</text>
</comment>
<comment type="subcellular location">
    <subcellularLocation>
        <location>Plastid</location>
        <location>Chloroplast</location>
    </subcellularLocation>
    <subcellularLocation>
        <location>Plastid</location>
    </subcellularLocation>
</comment>
<comment type="similarity">
    <text evidence="3">Belongs to the ferritin family.</text>
</comment>
<sequence length="253" mass="28619">MALSSSKFSSFSGFSLSPVSGNGVQKPCFCDLRVGEKWGSRKFRVSATTAPLTGVIFEPFEEVKKDYLAVPSVPLVSLARQNFADECESVINEQINVEYNASYVYHSLFAYFDRDNVALKGFAKFFKESSEEHREHAEKLMKYQNTRGGRVVLHPIKDVPSEFEHVEKGDALYAMELALSLEKLTNEKLLNVHSVAERNNDLEMTHFIEGEYLAEQVEAIKKISEYVAQLRRVGKGHGVWHFDQRLLHGVHGA</sequence>
<organism>
    <name type="scientific">Pisum sativum</name>
    <name type="common">Garden pea</name>
    <name type="synonym">Lathyrus oleraceus</name>
    <dbReference type="NCBI Taxonomy" id="3888"/>
    <lineage>
        <taxon>Eukaryota</taxon>
        <taxon>Viridiplantae</taxon>
        <taxon>Streptophyta</taxon>
        <taxon>Embryophyta</taxon>
        <taxon>Tracheophyta</taxon>
        <taxon>Spermatophyta</taxon>
        <taxon>Magnoliopsida</taxon>
        <taxon>eudicotyledons</taxon>
        <taxon>Gunneridae</taxon>
        <taxon>Pentapetalae</taxon>
        <taxon>rosids</taxon>
        <taxon>fabids</taxon>
        <taxon>Fabales</taxon>
        <taxon>Fabaceae</taxon>
        <taxon>Papilionoideae</taxon>
        <taxon>50 kb inversion clade</taxon>
        <taxon>NPAAA clade</taxon>
        <taxon>Hologalegina</taxon>
        <taxon>IRL clade</taxon>
        <taxon>Fabeae</taxon>
        <taxon>Pisum</taxon>
    </lineage>
</organism>
<feature type="transit peptide" description="Chloroplast" evidence="2">
    <location>
        <begin position="1"/>
        <end position="47"/>
    </location>
</feature>
<feature type="chain" id="PRO_0000008862" description="Ferritin-1, chloroplastic">
    <location>
        <begin position="48"/>
        <end position="253"/>
    </location>
</feature>
<feature type="domain" description="Ferritin-like diiron" evidence="1">
    <location>
        <begin position="81"/>
        <end position="234"/>
    </location>
</feature>
<feature type="region of interest" description="Extension peptide (EP)">
    <location>
        <begin position="48"/>
        <end position="80"/>
    </location>
</feature>
<feature type="binding site" evidence="1">
    <location>
        <position position="98"/>
    </location>
    <ligand>
        <name>Fe cation</name>
        <dbReference type="ChEBI" id="CHEBI:24875"/>
        <label>1</label>
    </ligand>
</feature>
<feature type="binding site" evidence="1">
    <location>
        <position position="136"/>
    </location>
    <ligand>
        <name>Fe cation</name>
        <dbReference type="ChEBI" id="CHEBI:24875"/>
        <label>1</label>
    </ligand>
</feature>
<feature type="binding site" evidence="1">
    <location>
        <position position="182"/>
    </location>
    <ligand>
        <name>Fe cation</name>
        <dbReference type="ChEBI" id="CHEBI:24875"/>
        <label>2</label>
    </ligand>
</feature>
<feature type="binding site" evidence="1">
    <location>
        <position position="216"/>
    </location>
    <ligand>
        <name>Fe cation</name>
        <dbReference type="ChEBI" id="CHEBI:24875"/>
        <label>2</label>
    </ligand>
</feature>
<feature type="sequence conflict" description="In Ref. 2; CAA51786." evidence="3" ref="2">
    <original>S</original>
    <variation>C</variation>
    <location>
        <position position="46"/>
    </location>
</feature>
<feature type="sequence conflict" description="In Ref. 2; CAA51786." evidence="3" ref="2">
    <original>A</original>
    <variation>V</variation>
    <location>
        <position position="101"/>
    </location>
</feature>
<feature type="sequence conflict" description="In Ref. 2; CAA51786." evidence="3" ref="2">
    <original>L</original>
    <variation>M</variation>
    <location>
        <position position="108"/>
    </location>
</feature>
<feature type="sequence conflict" description="In Ref. 2; CAA51786." evidence="3" ref="2">
    <original>H</original>
    <variation>E</variation>
    <location>
        <position position="133"/>
    </location>
</feature>
<feature type="sequence conflict" description="In Ref. 2; CAA51786." evidence="3" ref="2">
    <original>Y</original>
    <variation>H</variation>
    <location>
        <position position="173"/>
    </location>
</feature>